<reference key="1">
    <citation type="journal article" date="2009" name="PLoS Genet.">
        <title>Organised genome dynamics in the Escherichia coli species results in highly diverse adaptive paths.</title>
        <authorList>
            <person name="Touchon M."/>
            <person name="Hoede C."/>
            <person name="Tenaillon O."/>
            <person name="Barbe V."/>
            <person name="Baeriswyl S."/>
            <person name="Bidet P."/>
            <person name="Bingen E."/>
            <person name="Bonacorsi S."/>
            <person name="Bouchier C."/>
            <person name="Bouvet O."/>
            <person name="Calteau A."/>
            <person name="Chiapello H."/>
            <person name="Clermont O."/>
            <person name="Cruveiller S."/>
            <person name="Danchin A."/>
            <person name="Diard M."/>
            <person name="Dossat C."/>
            <person name="Karoui M.E."/>
            <person name="Frapy E."/>
            <person name="Garry L."/>
            <person name="Ghigo J.M."/>
            <person name="Gilles A.M."/>
            <person name="Johnson J."/>
            <person name="Le Bouguenec C."/>
            <person name="Lescat M."/>
            <person name="Mangenot S."/>
            <person name="Martinez-Jehanne V."/>
            <person name="Matic I."/>
            <person name="Nassif X."/>
            <person name="Oztas S."/>
            <person name="Petit M.A."/>
            <person name="Pichon C."/>
            <person name="Rouy Z."/>
            <person name="Ruf C.S."/>
            <person name="Schneider D."/>
            <person name="Tourret J."/>
            <person name="Vacherie B."/>
            <person name="Vallenet D."/>
            <person name="Medigue C."/>
            <person name="Rocha E.P.C."/>
            <person name="Denamur E."/>
        </authorList>
    </citation>
    <scope>NUCLEOTIDE SEQUENCE [LARGE SCALE GENOMIC DNA]</scope>
    <source>
        <strain>55989 / EAEC</strain>
    </source>
</reference>
<organism>
    <name type="scientific">Escherichia coli (strain 55989 / EAEC)</name>
    <dbReference type="NCBI Taxonomy" id="585055"/>
    <lineage>
        <taxon>Bacteria</taxon>
        <taxon>Pseudomonadati</taxon>
        <taxon>Pseudomonadota</taxon>
        <taxon>Gammaproteobacteria</taxon>
        <taxon>Enterobacterales</taxon>
        <taxon>Enterobacteriaceae</taxon>
        <taxon>Escherichia</taxon>
    </lineage>
</organism>
<protein>
    <recommendedName>
        <fullName evidence="1">NAD-dependent malic enzyme</fullName>
        <shortName evidence="1">NAD-ME</shortName>
        <ecNumber evidence="1">1.1.1.38</ecNumber>
    </recommendedName>
</protein>
<dbReference type="EC" id="1.1.1.38" evidence="1"/>
<dbReference type="EMBL" id="CU928145">
    <property type="protein sequence ID" value="CAU97465.1"/>
    <property type="molecule type" value="Genomic_DNA"/>
</dbReference>
<dbReference type="RefSeq" id="WP_000433475.1">
    <property type="nucleotide sequence ID" value="NC_011748.1"/>
</dbReference>
<dbReference type="SMR" id="B7L7H9"/>
<dbReference type="GeneID" id="75203182"/>
<dbReference type="KEGG" id="eck:EC55989_1611"/>
<dbReference type="HOGENOM" id="CLU_011405_5_2_6"/>
<dbReference type="Proteomes" id="UP000000746">
    <property type="component" value="Chromosome"/>
</dbReference>
<dbReference type="GO" id="GO:0005829">
    <property type="term" value="C:cytosol"/>
    <property type="evidence" value="ECO:0007669"/>
    <property type="project" value="TreeGrafter"/>
</dbReference>
<dbReference type="GO" id="GO:0004471">
    <property type="term" value="F:malate dehydrogenase (decarboxylating) (NAD+) activity"/>
    <property type="evidence" value="ECO:0007669"/>
    <property type="project" value="UniProtKB-UniRule"/>
</dbReference>
<dbReference type="GO" id="GO:0046872">
    <property type="term" value="F:metal ion binding"/>
    <property type="evidence" value="ECO:0007669"/>
    <property type="project" value="UniProtKB-KW"/>
</dbReference>
<dbReference type="GO" id="GO:0051287">
    <property type="term" value="F:NAD binding"/>
    <property type="evidence" value="ECO:0007669"/>
    <property type="project" value="InterPro"/>
</dbReference>
<dbReference type="GO" id="GO:0008948">
    <property type="term" value="F:oxaloacetate decarboxylase activity"/>
    <property type="evidence" value="ECO:0007669"/>
    <property type="project" value="UniProtKB-UniRule"/>
</dbReference>
<dbReference type="GO" id="GO:0006108">
    <property type="term" value="P:malate metabolic process"/>
    <property type="evidence" value="ECO:0007669"/>
    <property type="project" value="TreeGrafter"/>
</dbReference>
<dbReference type="CDD" id="cd05312">
    <property type="entry name" value="NAD_bind_1_malic_enz"/>
    <property type="match status" value="1"/>
</dbReference>
<dbReference type="FunFam" id="3.40.50.10380:FF:000001">
    <property type="entry name" value="NAD-dependent malic enzyme"/>
    <property type="match status" value="1"/>
</dbReference>
<dbReference type="FunFam" id="3.40.50.720:FF:000055">
    <property type="entry name" value="NAD-dependent malic enzyme"/>
    <property type="match status" value="1"/>
</dbReference>
<dbReference type="Gene3D" id="3.40.50.10380">
    <property type="entry name" value="Malic enzyme, N-terminal domain"/>
    <property type="match status" value="1"/>
</dbReference>
<dbReference type="Gene3D" id="3.40.50.720">
    <property type="entry name" value="NAD(P)-binding Rossmann-like Domain"/>
    <property type="match status" value="1"/>
</dbReference>
<dbReference type="HAMAP" id="MF_01619">
    <property type="entry name" value="NAD_malic_enz"/>
    <property type="match status" value="1"/>
</dbReference>
<dbReference type="InterPro" id="IPR046346">
    <property type="entry name" value="Aminoacid_DH-like_N_sf"/>
</dbReference>
<dbReference type="InterPro" id="IPR015884">
    <property type="entry name" value="Malic_enzyme_CS"/>
</dbReference>
<dbReference type="InterPro" id="IPR012301">
    <property type="entry name" value="Malic_N_dom"/>
</dbReference>
<dbReference type="InterPro" id="IPR037062">
    <property type="entry name" value="Malic_N_dom_sf"/>
</dbReference>
<dbReference type="InterPro" id="IPR012302">
    <property type="entry name" value="Malic_NAD-bd"/>
</dbReference>
<dbReference type="InterPro" id="IPR001891">
    <property type="entry name" value="Malic_OxRdtase"/>
</dbReference>
<dbReference type="InterPro" id="IPR036291">
    <property type="entry name" value="NAD(P)-bd_dom_sf"/>
</dbReference>
<dbReference type="InterPro" id="IPR023667">
    <property type="entry name" value="NAD_malic_enz_proteobac"/>
</dbReference>
<dbReference type="NCBIfam" id="NF010052">
    <property type="entry name" value="PRK13529.1"/>
    <property type="match status" value="1"/>
</dbReference>
<dbReference type="PANTHER" id="PTHR23406">
    <property type="entry name" value="MALIC ENZYME-RELATED"/>
    <property type="match status" value="1"/>
</dbReference>
<dbReference type="PANTHER" id="PTHR23406:SF34">
    <property type="entry name" value="NAD-DEPENDENT MALIC ENZYME, MITOCHONDRIAL"/>
    <property type="match status" value="1"/>
</dbReference>
<dbReference type="Pfam" id="PF00390">
    <property type="entry name" value="malic"/>
    <property type="match status" value="1"/>
</dbReference>
<dbReference type="Pfam" id="PF03949">
    <property type="entry name" value="Malic_M"/>
    <property type="match status" value="1"/>
</dbReference>
<dbReference type="PIRSF" id="PIRSF000106">
    <property type="entry name" value="ME"/>
    <property type="match status" value="1"/>
</dbReference>
<dbReference type="PRINTS" id="PR00072">
    <property type="entry name" value="MALOXRDTASE"/>
</dbReference>
<dbReference type="SMART" id="SM01274">
    <property type="entry name" value="malic"/>
    <property type="match status" value="1"/>
</dbReference>
<dbReference type="SMART" id="SM00919">
    <property type="entry name" value="Malic_M"/>
    <property type="match status" value="1"/>
</dbReference>
<dbReference type="SUPFAM" id="SSF53223">
    <property type="entry name" value="Aminoacid dehydrogenase-like, N-terminal domain"/>
    <property type="match status" value="1"/>
</dbReference>
<dbReference type="SUPFAM" id="SSF51735">
    <property type="entry name" value="NAD(P)-binding Rossmann-fold domains"/>
    <property type="match status" value="1"/>
</dbReference>
<dbReference type="PROSITE" id="PS00331">
    <property type="entry name" value="MALIC_ENZYMES"/>
    <property type="match status" value="1"/>
</dbReference>
<keyword id="KW-0479">Metal-binding</keyword>
<keyword id="KW-0520">NAD</keyword>
<keyword id="KW-0560">Oxidoreductase</keyword>
<keyword id="KW-1185">Reference proteome</keyword>
<sequence>MEPKTKKQRSLYIPYAGPVLLEFPLLNKGSAFSMEERRNFNLLGLLPEVVETIEEQAERAWIQYQGFKTEIDKHIYLRNIQDTNETLFYRLVNNHLDEMMPVIYTPTVGAACERFSEIYRRSRGVFISYQNRHNMDDILQNVPNHNIKVIVVTDGERILGLGDQGIGGMGIPIGKLSLYTACGGISPAYTLPVVLDVGTNNQQLLNDPLYMGWRNPRITDDEYYEFVDEFIQAVKQRWPDVLLQFEDFAQKNAMPLLNRYRNEICSFNDDIQGTAAVTVGTLIAASRAAGGQLSEKKIVFLGAGSAGCGIAEMIISQTQREGLSEEAARQKVFMVDRFGLLTDKMPNLLPFQTKLVQKRENLSDWDTDSDVLSLLDVVRNVKPDILIGVSGQTGLFTEEIIREMHKHCPRPIVMPLSNPTSRVEATPQDIIAWTEGNALVATGSPFNPVVWKDKIYPIAQCNNAFIFPGIGLGVIASGASRITDEMLMSASETLAQYSPLVLNGEGLVLPELKDIQKVSRAIAFAVGKMAQQQGVAVKTSAEALQQAIDDNFWQAEYRDYRRTSI</sequence>
<proteinExistence type="inferred from homology"/>
<evidence type="ECO:0000255" key="1">
    <source>
        <dbReference type="HAMAP-Rule" id="MF_01619"/>
    </source>
</evidence>
<name>MAO1_ECO55</name>
<gene>
    <name evidence="1" type="primary">maeA</name>
    <name type="ordered locus">EC55989_1611</name>
</gene>
<feature type="chain" id="PRO_1000185990" description="NAD-dependent malic enzyme">
    <location>
        <begin position="1"/>
        <end position="565"/>
    </location>
</feature>
<feature type="active site" description="Proton donor" evidence="1">
    <location>
        <position position="104"/>
    </location>
</feature>
<feature type="active site" description="Proton acceptor" evidence="1">
    <location>
        <position position="175"/>
    </location>
</feature>
<feature type="binding site" evidence="1">
    <location>
        <position position="157"/>
    </location>
    <ligand>
        <name>NAD(+)</name>
        <dbReference type="ChEBI" id="CHEBI:57540"/>
    </ligand>
</feature>
<feature type="binding site" evidence="1">
    <location>
        <position position="246"/>
    </location>
    <ligand>
        <name>a divalent metal cation</name>
        <dbReference type="ChEBI" id="CHEBI:60240"/>
    </ligand>
</feature>
<feature type="binding site" evidence="1">
    <location>
        <position position="247"/>
    </location>
    <ligand>
        <name>a divalent metal cation</name>
        <dbReference type="ChEBI" id="CHEBI:60240"/>
    </ligand>
</feature>
<feature type="binding site" evidence="1">
    <location>
        <position position="270"/>
    </location>
    <ligand>
        <name>a divalent metal cation</name>
        <dbReference type="ChEBI" id="CHEBI:60240"/>
    </ligand>
</feature>
<feature type="binding site" evidence="1">
    <location>
        <position position="270"/>
    </location>
    <ligand>
        <name>NAD(+)</name>
        <dbReference type="ChEBI" id="CHEBI:57540"/>
    </ligand>
</feature>
<feature type="binding site" evidence="1">
    <location>
        <position position="418"/>
    </location>
    <ligand>
        <name>NAD(+)</name>
        <dbReference type="ChEBI" id="CHEBI:57540"/>
    </ligand>
</feature>
<feature type="site" description="Important for activity" evidence="1">
    <location>
        <position position="270"/>
    </location>
</feature>
<comment type="catalytic activity">
    <reaction evidence="1">
        <text>(S)-malate + NAD(+) = pyruvate + CO2 + NADH</text>
        <dbReference type="Rhea" id="RHEA:12653"/>
        <dbReference type="ChEBI" id="CHEBI:15361"/>
        <dbReference type="ChEBI" id="CHEBI:15589"/>
        <dbReference type="ChEBI" id="CHEBI:16526"/>
        <dbReference type="ChEBI" id="CHEBI:57540"/>
        <dbReference type="ChEBI" id="CHEBI:57945"/>
        <dbReference type="EC" id="1.1.1.38"/>
    </reaction>
</comment>
<comment type="catalytic activity">
    <reaction evidence="1">
        <text>oxaloacetate + H(+) = pyruvate + CO2</text>
        <dbReference type="Rhea" id="RHEA:15641"/>
        <dbReference type="ChEBI" id="CHEBI:15361"/>
        <dbReference type="ChEBI" id="CHEBI:15378"/>
        <dbReference type="ChEBI" id="CHEBI:16452"/>
        <dbReference type="ChEBI" id="CHEBI:16526"/>
        <dbReference type="EC" id="1.1.1.38"/>
    </reaction>
</comment>
<comment type="cofactor">
    <cofactor evidence="1">
        <name>Mg(2+)</name>
        <dbReference type="ChEBI" id="CHEBI:18420"/>
    </cofactor>
    <cofactor evidence="1">
        <name>Mn(2+)</name>
        <dbReference type="ChEBI" id="CHEBI:29035"/>
    </cofactor>
    <text evidence="1">Divalent metal cations. Prefers magnesium or manganese.</text>
</comment>
<comment type="subunit">
    <text evidence="1">Homotetramer.</text>
</comment>
<comment type="similarity">
    <text evidence="1">Belongs to the malic enzymes family.</text>
</comment>
<accession>B7L7H9</accession>